<protein>
    <recommendedName>
        <fullName>Olfactory receptor-like protein COR8</fullName>
    </recommendedName>
</protein>
<evidence type="ECO:0000255" key="1"/>
<evidence type="ECO:0000255" key="2">
    <source>
        <dbReference type="PROSITE-ProRule" id="PRU00521"/>
    </source>
</evidence>
<evidence type="ECO:0000305" key="3"/>
<sequence length="159" mass="17385">VAICNPLLYTISMPKSLCMKLVAGSYLGGVLNSLTQTCCLLPLPFCGPNVINHYFCDTNPLLKLTCSDGRLNELLLVTFNGTISMTVLLIIVISYVYILVSILSIRSARGRHKAFSTCASHLLTVTLFYVPAGLSHMQPGSKYSLDMEKVTAVFYTLLV</sequence>
<keyword id="KW-1003">Cell membrane</keyword>
<keyword id="KW-0297">G-protein coupled receptor</keyword>
<keyword id="KW-0325">Glycoprotein</keyword>
<keyword id="KW-0472">Membrane</keyword>
<keyword id="KW-0552">Olfaction</keyword>
<keyword id="KW-0675">Receptor</keyword>
<keyword id="KW-1185">Reference proteome</keyword>
<keyword id="KW-0716">Sensory transduction</keyword>
<keyword id="KW-0807">Transducer</keyword>
<keyword id="KW-0812">Transmembrane</keyword>
<keyword id="KW-1133">Transmembrane helix</keyword>
<gene>
    <name type="primary">COR8</name>
</gene>
<comment type="function">
    <text evidence="3">Odorant receptor.</text>
</comment>
<comment type="subcellular location">
    <subcellularLocation>
        <location>Cell membrane</location>
        <topology>Multi-pass membrane protein</topology>
    </subcellularLocation>
</comment>
<comment type="similarity">
    <text evidence="2">Belongs to the G-protein coupled receptor 1 family.</text>
</comment>
<organism>
    <name type="scientific">Gallus gallus</name>
    <name type="common">Chicken</name>
    <dbReference type="NCBI Taxonomy" id="9031"/>
    <lineage>
        <taxon>Eukaryota</taxon>
        <taxon>Metazoa</taxon>
        <taxon>Chordata</taxon>
        <taxon>Craniata</taxon>
        <taxon>Vertebrata</taxon>
        <taxon>Euteleostomi</taxon>
        <taxon>Archelosauria</taxon>
        <taxon>Archosauria</taxon>
        <taxon>Dinosauria</taxon>
        <taxon>Saurischia</taxon>
        <taxon>Theropoda</taxon>
        <taxon>Coelurosauria</taxon>
        <taxon>Aves</taxon>
        <taxon>Neognathae</taxon>
        <taxon>Galloanserae</taxon>
        <taxon>Galliformes</taxon>
        <taxon>Phasianidae</taxon>
        <taxon>Phasianinae</taxon>
        <taxon>Gallus</taxon>
    </lineage>
</organism>
<dbReference type="EMBL" id="Z79591">
    <property type="protein sequence ID" value="CAB01852.1"/>
    <property type="molecule type" value="Genomic_DNA"/>
</dbReference>
<dbReference type="SMR" id="Q98913"/>
<dbReference type="GlyCosmos" id="Q98913">
    <property type="glycosylation" value="1 site, No reported glycans"/>
</dbReference>
<dbReference type="GlyGen" id="Q98913">
    <property type="glycosylation" value="1 site"/>
</dbReference>
<dbReference type="PaxDb" id="9031-ENSGALP00000005720"/>
<dbReference type="VEuPathDB" id="HostDB:geneid_428820"/>
<dbReference type="eggNOG" id="ENOG502QVH7">
    <property type="taxonomic scope" value="Eukaryota"/>
</dbReference>
<dbReference type="InParanoid" id="Q98913"/>
<dbReference type="OrthoDB" id="9891208at2759"/>
<dbReference type="PhylomeDB" id="Q98913"/>
<dbReference type="Proteomes" id="UP000000539">
    <property type="component" value="Unassembled WGS sequence"/>
</dbReference>
<dbReference type="GO" id="GO:0005886">
    <property type="term" value="C:plasma membrane"/>
    <property type="evidence" value="ECO:0007669"/>
    <property type="project" value="UniProtKB-SubCell"/>
</dbReference>
<dbReference type="GO" id="GO:0004930">
    <property type="term" value="F:G protein-coupled receptor activity"/>
    <property type="evidence" value="ECO:0007669"/>
    <property type="project" value="UniProtKB-KW"/>
</dbReference>
<dbReference type="GO" id="GO:0005549">
    <property type="term" value="F:odorant binding"/>
    <property type="evidence" value="ECO:0000318"/>
    <property type="project" value="GO_Central"/>
</dbReference>
<dbReference type="GO" id="GO:0004984">
    <property type="term" value="F:olfactory receptor activity"/>
    <property type="evidence" value="ECO:0000318"/>
    <property type="project" value="GO_Central"/>
</dbReference>
<dbReference type="FunFam" id="1.20.1070.10:FF:000530">
    <property type="entry name" value="Putative olfactory receptor"/>
    <property type="match status" value="1"/>
</dbReference>
<dbReference type="Gene3D" id="1.20.1070.10">
    <property type="entry name" value="Rhodopsin 7-helix transmembrane proteins"/>
    <property type="match status" value="1"/>
</dbReference>
<dbReference type="InterPro" id="IPR017452">
    <property type="entry name" value="GPCR_Rhodpsn_7TM"/>
</dbReference>
<dbReference type="InterPro" id="IPR000725">
    <property type="entry name" value="Olfact_rcpt"/>
</dbReference>
<dbReference type="PANTHER" id="PTHR48018">
    <property type="entry name" value="OLFACTORY RECEPTOR"/>
    <property type="match status" value="1"/>
</dbReference>
<dbReference type="Pfam" id="PF13853">
    <property type="entry name" value="7tm_4"/>
    <property type="match status" value="1"/>
</dbReference>
<dbReference type="PRINTS" id="PR00245">
    <property type="entry name" value="OLFACTORYR"/>
</dbReference>
<dbReference type="SUPFAM" id="SSF81321">
    <property type="entry name" value="Family A G protein-coupled receptor-like"/>
    <property type="match status" value="1"/>
</dbReference>
<dbReference type="PROSITE" id="PS50262">
    <property type="entry name" value="G_PROTEIN_RECEP_F1_2"/>
    <property type="match status" value="1"/>
</dbReference>
<proteinExistence type="inferred from homology"/>
<reference key="1">
    <citation type="journal article" date="1996" name="Mech. Dev.">
        <title>Olfaction in birds: differential embryonic expression of nine putative odorant receptor genes in the avian olfactory system.</title>
        <authorList>
            <person name="Nef S."/>
            <person name="Allaman I."/>
            <person name="Fiumelli H."/>
            <person name="de Castro E."/>
            <person name="Nef P."/>
        </authorList>
    </citation>
    <scope>NUCLEOTIDE SEQUENCE [GENOMIC DNA]</scope>
    <source>
        <tissue>Olfactory epithelium</tissue>
    </source>
</reference>
<accession>Q98913</accession>
<feature type="chain" id="PRO_0000150886" description="Olfactory receptor-like protein COR8">
    <location>
        <begin position="1" status="less than"/>
        <end position="159" status="greater than"/>
    </location>
</feature>
<feature type="topological domain" description="Cytoplasmic" evidence="1">
    <location>
        <begin position="1" status="less than"/>
        <end position="16"/>
    </location>
</feature>
<feature type="transmembrane region" description="Helical; Name=4" evidence="1">
    <location>
        <begin position="17"/>
        <end position="41"/>
    </location>
</feature>
<feature type="topological domain" description="Extracellular" evidence="1">
    <location>
        <begin position="42"/>
        <end position="82"/>
    </location>
</feature>
<feature type="transmembrane region" description="Helical; Name=5" evidence="1">
    <location>
        <begin position="83"/>
        <end position="103"/>
    </location>
</feature>
<feature type="topological domain" description="Cytoplasmic" evidence="1">
    <location>
        <begin position="104"/>
        <end position="116"/>
    </location>
</feature>
<feature type="transmembrane region" description="Helical; Name=6" evidence="1">
    <location>
        <begin position="117"/>
        <end position="137"/>
    </location>
</feature>
<feature type="topological domain" description="Extracellular" evidence="1">
    <location>
        <begin position="138"/>
        <end position="148"/>
    </location>
</feature>
<feature type="transmembrane region" description="Helical; Name=7" evidence="1">
    <location>
        <begin position="149"/>
        <end position="159" status="greater than"/>
    </location>
</feature>
<feature type="glycosylation site" description="N-linked (GlcNAc...) asparagine" evidence="1">
    <location>
        <position position="80"/>
    </location>
</feature>
<feature type="non-terminal residue">
    <location>
        <position position="1"/>
    </location>
</feature>
<feature type="non-terminal residue">
    <location>
        <position position="159"/>
    </location>
</feature>
<name>OLF8_CHICK</name>